<sequence>MTSFHHDDPERAVKVHVTQGESHVTADPNVVMTTVLGSCIAACIRDPQSGVGGMNHFLLPDSGDGRRDGDAVRYGAYAMEVLINDLLKRGARRERLEAKIFGGAKLFDGLSDVGASNAAFAERFLRDEGIPIVSSSTGGVSARRVEFWPASGRVRQRLVAVDNAPQDVRRPTPPPMPAVASGDVDLF</sequence>
<evidence type="ECO:0000255" key="1">
    <source>
        <dbReference type="HAMAP-Rule" id="MF_01440"/>
    </source>
</evidence>
<evidence type="ECO:0000256" key="2">
    <source>
        <dbReference type="SAM" id="MobiDB-lite"/>
    </source>
</evidence>
<feature type="chain" id="PRO_0000251021" description="Probable chemoreceptor glutamine deamidase CheD">
    <location>
        <begin position="1"/>
        <end position="187"/>
    </location>
</feature>
<feature type="region of interest" description="Disordered" evidence="2">
    <location>
        <begin position="164"/>
        <end position="187"/>
    </location>
</feature>
<organism>
    <name type="scientific">Caulobacter vibrioides (strain ATCC 19089 / CIP 103742 / CB 15)</name>
    <name type="common">Caulobacter crescentus</name>
    <dbReference type="NCBI Taxonomy" id="190650"/>
    <lineage>
        <taxon>Bacteria</taxon>
        <taxon>Pseudomonadati</taxon>
        <taxon>Pseudomonadota</taxon>
        <taxon>Alphaproteobacteria</taxon>
        <taxon>Caulobacterales</taxon>
        <taxon>Caulobacteraceae</taxon>
        <taxon>Caulobacter</taxon>
    </lineage>
</organism>
<protein>
    <recommendedName>
        <fullName evidence="1">Probable chemoreceptor glutamine deamidase CheD</fullName>
        <ecNumber evidence="1">3.5.1.44</ecNumber>
    </recommendedName>
</protein>
<keyword id="KW-0145">Chemotaxis</keyword>
<keyword id="KW-0378">Hydrolase</keyword>
<keyword id="KW-1185">Reference proteome</keyword>
<proteinExistence type="inferred from homology"/>
<dbReference type="EC" id="3.5.1.44" evidence="1"/>
<dbReference type="EMBL" id="AJ006687">
    <property type="protein sequence ID" value="CAA07182.1"/>
    <property type="molecule type" value="Genomic_DNA"/>
</dbReference>
<dbReference type="EMBL" id="AE005673">
    <property type="protein sequence ID" value="AAK22425.1"/>
    <property type="molecule type" value="Genomic_DNA"/>
</dbReference>
<dbReference type="PIR" id="E87303">
    <property type="entry name" value="E87303"/>
</dbReference>
<dbReference type="RefSeq" id="NP_419257.1">
    <property type="nucleotide sequence ID" value="NC_002696.2"/>
</dbReference>
<dbReference type="RefSeq" id="WP_010918326.1">
    <property type="nucleotide sequence ID" value="NC_002696.2"/>
</dbReference>
<dbReference type="SMR" id="O87719"/>
<dbReference type="STRING" id="190650.CC_0438"/>
<dbReference type="DNASU" id="942001"/>
<dbReference type="EnsemblBacteria" id="AAK22425">
    <property type="protein sequence ID" value="AAK22425"/>
    <property type="gene ID" value="CC_0438"/>
</dbReference>
<dbReference type="KEGG" id="ccr:CC_0438"/>
<dbReference type="PATRIC" id="fig|190650.5.peg.443"/>
<dbReference type="eggNOG" id="COG1871">
    <property type="taxonomic scope" value="Bacteria"/>
</dbReference>
<dbReference type="HOGENOM" id="CLU_087854_0_1_5"/>
<dbReference type="BioCyc" id="CAULO:CC0438-MONOMER"/>
<dbReference type="Proteomes" id="UP000001816">
    <property type="component" value="Chromosome"/>
</dbReference>
<dbReference type="GO" id="GO:0050568">
    <property type="term" value="F:protein-glutamine glutaminase activity"/>
    <property type="evidence" value="ECO:0007669"/>
    <property type="project" value="UniProtKB-UniRule"/>
</dbReference>
<dbReference type="GO" id="GO:0006935">
    <property type="term" value="P:chemotaxis"/>
    <property type="evidence" value="ECO:0007669"/>
    <property type="project" value="UniProtKB-UniRule"/>
</dbReference>
<dbReference type="CDD" id="cd16352">
    <property type="entry name" value="CheD"/>
    <property type="match status" value="1"/>
</dbReference>
<dbReference type="Gene3D" id="3.30.1330.200">
    <property type="match status" value="1"/>
</dbReference>
<dbReference type="HAMAP" id="MF_01440">
    <property type="entry name" value="CheD"/>
    <property type="match status" value="1"/>
</dbReference>
<dbReference type="InterPro" id="IPR038592">
    <property type="entry name" value="CheD-like_sf"/>
</dbReference>
<dbReference type="InterPro" id="IPR005659">
    <property type="entry name" value="Chemorcpt_Glu_NH3ase_CheD"/>
</dbReference>
<dbReference type="InterPro" id="IPR011324">
    <property type="entry name" value="Cytotoxic_necrot_fac-like_cat"/>
</dbReference>
<dbReference type="PANTHER" id="PTHR35147">
    <property type="entry name" value="CHEMORECEPTOR GLUTAMINE DEAMIDASE CHED-RELATED"/>
    <property type="match status" value="1"/>
</dbReference>
<dbReference type="PANTHER" id="PTHR35147:SF2">
    <property type="entry name" value="CHEMORECEPTOR GLUTAMINE DEAMIDASE CHED-RELATED"/>
    <property type="match status" value="1"/>
</dbReference>
<dbReference type="Pfam" id="PF03975">
    <property type="entry name" value="CheD"/>
    <property type="match status" value="1"/>
</dbReference>
<dbReference type="SUPFAM" id="SSF64438">
    <property type="entry name" value="CNF1/YfiH-like putative cysteine hydrolases"/>
    <property type="match status" value="1"/>
</dbReference>
<gene>
    <name evidence="1" type="primary">cheD</name>
    <name type="ordered locus">CC_0438</name>
</gene>
<accession>O87719</accession>
<accession>Q7DB37</accession>
<reference key="1">
    <citation type="submission" date="1998-06" db="EMBL/GenBank/DDBJ databases">
        <title>The Caulobacter major chemotaxis operon.</title>
        <authorList>
            <person name="Alley M.R.K."/>
        </authorList>
    </citation>
    <scope>NUCLEOTIDE SEQUENCE [GENOMIC DNA]</scope>
    <source>
        <strain>ATCC 19089 / CIP 103742 / CB 15</strain>
    </source>
</reference>
<reference key="2">
    <citation type="journal article" date="2001" name="Proc. Natl. Acad. Sci. U.S.A.">
        <title>Complete genome sequence of Caulobacter crescentus.</title>
        <authorList>
            <person name="Nierman W.C."/>
            <person name="Feldblyum T.V."/>
            <person name="Laub M.T."/>
            <person name="Paulsen I.T."/>
            <person name="Nelson K.E."/>
            <person name="Eisen J.A."/>
            <person name="Heidelberg J.F."/>
            <person name="Alley M.R.K."/>
            <person name="Ohta N."/>
            <person name="Maddock J.R."/>
            <person name="Potocka I."/>
            <person name="Nelson W.C."/>
            <person name="Newton A."/>
            <person name="Stephens C."/>
            <person name="Phadke N.D."/>
            <person name="Ely B."/>
            <person name="DeBoy R.T."/>
            <person name="Dodson R.J."/>
            <person name="Durkin A.S."/>
            <person name="Gwinn M.L."/>
            <person name="Haft D.H."/>
            <person name="Kolonay J.F."/>
            <person name="Smit J."/>
            <person name="Craven M.B."/>
            <person name="Khouri H.M."/>
            <person name="Shetty J."/>
            <person name="Berry K.J."/>
            <person name="Utterback T.R."/>
            <person name="Tran K."/>
            <person name="Wolf A.M."/>
            <person name="Vamathevan J.J."/>
            <person name="Ermolaeva M.D."/>
            <person name="White O."/>
            <person name="Salzberg S.L."/>
            <person name="Venter J.C."/>
            <person name="Shapiro L."/>
            <person name="Fraser C.M."/>
        </authorList>
    </citation>
    <scope>NUCLEOTIDE SEQUENCE [LARGE SCALE GENOMIC DNA]</scope>
    <source>
        <strain>ATCC 19089 / CIP 103742 / CB 15</strain>
    </source>
</reference>
<name>CHED_CAUVC</name>
<comment type="function">
    <text evidence="1">Probably deamidates glutamine residues to glutamate on methyl-accepting chemotaxis receptors (MCPs), playing an important role in chemotaxis.</text>
</comment>
<comment type="catalytic activity">
    <reaction evidence="1">
        <text>L-glutaminyl-[protein] + H2O = L-glutamyl-[protein] + NH4(+)</text>
        <dbReference type="Rhea" id="RHEA:16441"/>
        <dbReference type="Rhea" id="RHEA-COMP:10207"/>
        <dbReference type="Rhea" id="RHEA-COMP:10208"/>
        <dbReference type="ChEBI" id="CHEBI:15377"/>
        <dbReference type="ChEBI" id="CHEBI:28938"/>
        <dbReference type="ChEBI" id="CHEBI:29973"/>
        <dbReference type="ChEBI" id="CHEBI:30011"/>
        <dbReference type="EC" id="3.5.1.44"/>
    </reaction>
</comment>
<comment type="similarity">
    <text evidence="1">Belongs to the CheD family.</text>
</comment>